<evidence type="ECO:0000255" key="1">
    <source>
        <dbReference type="PROSITE-ProRule" id="PRU00834"/>
    </source>
</evidence>
<sequence length="175" mass="19889">MWSFARYTQKFCLRNLQLKNFSNKVKVSSLLFCSPNVRNISNWQCKRFTQSDAKDLASGVPSVKSDADQLQPKPTYNVSFTCTVCNTRSNHNFSKQAYHNGTVLVQCPKCKNRHLMADHLKIFSEERVTIEDILAKKGETFKKGYGQVINGNVVEFKPPQFKIRPAKSSSSNSSK</sequence>
<name>YA72_SCHPO</name>
<keyword id="KW-0479">Metal-binding</keyword>
<keyword id="KW-1185">Reference proteome</keyword>
<keyword id="KW-0862">Zinc</keyword>
<keyword id="KW-0863">Zinc-finger</keyword>
<reference key="1">
    <citation type="journal article" date="2002" name="Nature">
        <title>The genome sequence of Schizosaccharomyces pombe.</title>
        <authorList>
            <person name="Wood V."/>
            <person name="Gwilliam R."/>
            <person name="Rajandream M.A."/>
            <person name="Lyne M.H."/>
            <person name="Lyne R."/>
            <person name="Stewart A."/>
            <person name="Sgouros J.G."/>
            <person name="Peat N."/>
            <person name="Hayles J."/>
            <person name="Baker S.G."/>
            <person name="Basham D."/>
            <person name="Bowman S."/>
            <person name="Brooks K."/>
            <person name="Brown D."/>
            <person name="Brown S."/>
            <person name="Chillingworth T."/>
            <person name="Churcher C.M."/>
            <person name="Collins M."/>
            <person name="Connor R."/>
            <person name="Cronin A."/>
            <person name="Davis P."/>
            <person name="Feltwell T."/>
            <person name="Fraser A."/>
            <person name="Gentles S."/>
            <person name="Goble A."/>
            <person name="Hamlin N."/>
            <person name="Harris D.E."/>
            <person name="Hidalgo J."/>
            <person name="Hodgson G."/>
            <person name="Holroyd S."/>
            <person name="Hornsby T."/>
            <person name="Howarth S."/>
            <person name="Huckle E.J."/>
            <person name="Hunt S."/>
            <person name="Jagels K."/>
            <person name="James K.D."/>
            <person name="Jones L."/>
            <person name="Jones M."/>
            <person name="Leather S."/>
            <person name="McDonald S."/>
            <person name="McLean J."/>
            <person name="Mooney P."/>
            <person name="Moule S."/>
            <person name="Mungall K.L."/>
            <person name="Murphy L.D."/>
            <person name="Niblett D."/>
            <person name="Odell C."/>
            <person name="Oliver K."/>
            <person name="O'Neil S."/>
            <person name="Pearson D."/>
            <person name="Quail M.A."/>
            <person name="Rabbinowitsch E."/>
            <person name="Rutherford K.M."/>
            <person name="Rutter S."/>
            <person name="Saunders D."/>
            <person name="Seeger K."/>
            <person name="Sharp S."/>
            <person name="Skelton J."/>
            <person name="Simmonds M.N."/>
            <person name="Squares R."/>
            <person name="Squares S."/>
            <person name="Stevens K."/>
            <person name="Taylor K."/>
            <person name="Taylor R.G."/>
            <person name="Tivey A."/>
            <person name="Walsh S.V."/>
            <person name="Warren T."/>
            <person name="Whitehead S."/>
            <person name="Woodward J.R."/>
            <person name="Volckaert G."/>
            <person name="Aert R."/>
            <person name="Robben J."/>
            <person name="Grymonprez B."/>
            <person name="Weltjens I."/>
            <person name="Vanstreels E."/>
            <person name="Rieger M."/>
            <person name="Schaefer M."/>
            <person name="Mueller-Auer S."/>
            <person name="Gabel C."/>
            <person name="Fuchs M."/>
            <person name="Duesterhoeft A."/>
            <person name="Fritzc C."/>
            <person name="Holzer E."/>
            <person name="Moestl D."/>
            <person name="Hilbert H."/>
            <person name="Borzym K."/>
            <person name="Langer I."/>
            <person name="Beck A."/>
            <person name="Lehrach H."/>
            <person name="Reinhardt R."/>
            <person name="Pohl T.M."/>
            <person name="Eger P."/>
            <person name="Zimmermann W."/>
            <person name="Wedler H."/>
            <person name="Wambutt R."/>
            <person name="Purnelle B."/>
            <person name="Goffeau A."/>
            <person name="Cadieu E."/>
            <person name="Dreano S."/>
            <person name="Gloux S."/>
            <person name="Lelaure V."/>
            <person name="Mottier S."/>
            <person name="Galibert F."/>
            <person name="Aves S.J."/>
            <person name="Xiang Z."/>
            <person name="Hunt C."/>
            <person name="Moore K."/>
            <person name="Hurst S.M."/>
            <person name="Lucas M."/>
            <person name="Rochet M."/>
            <person name="Gaillardin C."/>
            <person name="Tallada V.A."/>
            <person name="Garzon A."/>
            <person name="Thode G."/>
            <person name="Daga R.R."/>
            <person name="Cruzado L."/>
            <person name="Jimenez J."/>
            <person name="Sanchez M."/>
            <person name="del Rey F."/>
            <person name="Benito J."/>
            <person name="Dominguez A."/>
            <person name="Revuelta J.L."/>
            <person name="Moreno S."/>
            <person name="Armstrong J."/>
            <person name="Forsburg S.L."/>
            <person name="Cerutti L."/>
            <person name="Lowe T."/>
            <person name="McCombie W.R."/>
            <person name="Paulsen I."/>
            <person name="Potashkin J."/>
            <person name="Shpakovski G.V."/>
            <person name="Ussery D."/>
            <person name="Barrell B.G."/>
            <person name="Nurse P."/>
        </authorList>
    </citation>
    <scope>NUCLEOTIDE SEQUENCE [LARGE SCALE GENOMIC DNA]</scope>
    <source>
        <strain>972 / ATCC 24843</strain>
    </source>
</reference>
<accession>Q09759</accession>
<feature type="chain" id="PRO_0000116395" description="Uncharacterized protein C24H6.02c">
    <location>
        <begin position="1"/>
        <end position="175"/>
    </location>
</feature>
<feature type="zinc finger region" description="DNL-type" evidence="1">
    <location>
        <begin position="71"/>
        <end position="166"/>
    </location>
</feature>
<feature type="binding site" evidence="1">
    <location>
        <position position="82"/>
    </location>
    <ligand>
        <name>Zn(2+)</name>
        <dbReference type="ChEBI" id="CHEBI:29105"/>
    </ligand>
</feature>
<feature type="binding site" evidence="1">
    <location>
        <position position="85"/>
    </location>
    <ligand>
        <name>Zn(2+)</name>
        <dbReference type="ChEBI" id="CHEBI:29105"/>
    </ligand>
</feature>
<feature type="binding site" evidence="1">
    <location>
        <position position="107"/>
    </location>
    <ligand>
        <name>Zn(2+)</name>
        <dbReference type="ChEBI" id="CHEBI:29105"/>
    </ligand>
</feature>
<feature type="binding site" evidence="1">
    <location>
        <position position="110"/>
    </location>
    <ligand>
        <name>Zn(2+)</name>
        <dbReference type="ChEBI" id="CHEBI:29105"/>
    </ligand>
</feature>
<organism>
    <name type="scientific">Schizosaccharomyces pombe (strain 972 / ATCC 24843)</name>
    <name type="common">Fission yeast</name>
    <dbReference type="NCBI Taxonomy" id="284812"/>
    <lineage>
        <taxon>Eukaryota</taxon>
        <taxon>Fungi</taxon>
        <taxon>Dikarya</taxon>
        <taxon>Ascomycota</taxon>
        <taxon>Taphrinomycotina</taxon>
        <taxon>Schizosaccharomycetes</taxon>
        <taxon>Schizosaccharomycetales</taxon>
        <taxon>Schizosaccharomycetaceae</taxon>
        <taxon>Schizosaccharomyces</taxon>
    </lineage>
</organism>
<protein>
    <recommendedName>
        <fullName>Uncharacterized protein C24H6.02c</fullName>
    </recommendedName>
</protein>
<proteinExistence type="predicted"/>
<gene>
    <name type="ORF">SPAC24H6.02c</name>
</gene>
<dbReference type="EMBL" id="CU329670">
    <property type="protein sequence ID" value="CAA90846.1"/>
    <property type="molecule type" value="Genomic_DNA"/>
</dbReference>
<dbReference type="PIR" id="T38358">
    <property type="entry name" value="S62404"/>
</dbReference>
<dbReference type="SMR" id="Q09759"/>
<dbReference type="FunCoup" id="Q09759">
    <property type="interactions" value="181"/>
</dbReference>
<dbReference type="STRING" id="284812.Q09759"/>
<dbReference type="PaxDb" id="4896-SPAC24H6.02c.1"/>
<dbReference type="EnsemblFungi" id="SPAC24H6.02c.1">
    <property type="protein sequence ID" value="SPAC24H6.02c.1:pep"/>
    <property type="gene ID" value="SPAC24H6.02c"/>
</dbReference>
<dbReference type="KEGG" id="spo:2542642"/>
<dbReference type="PomBase" id="SPAC24H6.02c"/>
<dbReference type="VEuPathDB" id="FungiDB:SPAC24H6.02c"/>
<dbReference type="eggNOG" id="KOG3277">
    <property type="taxonomic scope" value="Eukaryota"/>
</dbReference>
<dbReference type="HOGENOM" id="CLU_093902_1_1_1"/>
<dbReference type="InParanoid" id="Q09759"/>
<dbReference type="OMA" id="CKNRHLM"/>
<dbReference type="PhylomeDB" id="Q09759"/>
<dbReference type="PRO" id="PR:Q09759"/>
<dbReference type="Proteomes" id="UP000002485">
    <property type="component" value="Chromosome I"/>
</dbReference>
<dbReference type="GO" id="GO:0005759">
    <property type="term" value="C:mitochondrial matrix"/>
    <property type="evidence" value="ECO:0000266"/>
    <property type="project" value="PomBase"/>
</dbReference>
<dbReference type="GO" id="GO:0005739">
    <property type="term" value="C:mitochondrion"/>
    <property type="evidence" value="ECO:0007005"/>
    <property type="project" value="PomBase"/>
</dbReference>
<dbReference type="GO" id="GO:0051087">
    <property type="term" value="F:protein-folding chaperone binding"/>
    <property type="evidence" value="ECO:0000318"/>
    <property type="project" value="GO_Central"/>
</dbReference>
<dbReference type="GO" id="GO:0008270">
    <property type="term" value="F:zinc ion binding"/>
    <property type="evidence" value="ECO:0007669"/>
    <property type="project" value="UniProtKB-KW"/>
</dbReference>
<dbReference type="GO" id="GO:0006457">
    <property type="term" value="P:protein folding"/>
    <property type="evidence" value="ECO:0000318"/>
    <property type="project" value="GO_Central"/>
</dbReference>
<dbReference type="GO" id="GO:0030150">
    <property type="term" value="P:protein import into mitochondrial matrix"/>
    <property type="evidence" value="ECO:0000266"/>
    <property type="project" value="PomBase"/>
</dbReference>
<dbReference type="GO" id="GO:0050821">
    <property type="term" value="P:protein stabilization"/>
    <property type="evidence" value="ECO:0000318"/>
    <property type="project" value="GO_Central"/>
</dbReference>
<dbReference type="InterPro" id="IPR024158">
    <property type="entry name" value="Mt_import_TIM15"/>
</dbReference>
<dbReference type="InterPro" id="IPR007853">
    <property type="entry name" value="Znf_DNL-typ"/>
</dbReference>
<dbReference type="PANTHER" id="PTHR20922">
    <property type="entry name" value="DNL-TYPE ZINC FINGER PROTEIN"/>
    <property type="match status" value="1"/>
</dbReference>
<dbReference type="PANTHER" id="PTHR20922:SF13">
    <property type="entry name" value="DNL-TYPE ZINC FINGER PROTEIN"/>
    <property type="match status" value="1"/>
</dbReference>
<dbReference type="Pfam" id="PF05180">
    <property type="entry name" value="zf-DNL"/>
    <property type="match status" value="1"/>
</dbReference>
<dbReference type="PROSITE" id="PS51501">
    <property type="entry name" value="ZF_DNL"/>
    <property type="match status" value="1"/>
</dbReference>